<reference key="1">
    <citation type="journal article" date="2005" name="J. Bacteriol.">
        <title>Whole-genome sequence analysis of Pseudomonas syringae pv. phaseolicola 1448A reveals divergence among pathovars in genes involved in virulence and transposition.</title>
        <authorList>
            <person name="Joardar V."/>
            <person name="Lindeberg M."/>
            <person name="Jackson R.W."/>
            <person name="Selengut J."/>
            <person name="Dodson R."/>
            <person name="Brinkac L.M."/>
            <person name="Daugherty S.C."/>
            <person name="DeBoy R.T."/>
            <person name="Durkin A.S."/>
            <person name="Gwinn Giglio M."/>
            <person name="Madupu R."/>
            <person name="Nelson W.C."/>
            <person name="Rosovitz M.J."/>
            <person name="Sullivan S.A."/>
            <person name="Crabtree J."/>
            <person name="Creasy T."/>
            <person name="Davidsen T.M."/>
            <person name="Haft D.H."/>
            <person name="Zafar N."/>
            <person name="Zhou L."/>
            <person name="Halpin R."/>
            <person name="Holley T."/>
            <person name="Khouri H.M."/>
            <person name="Feldblyum T.V."/>
            <person name="White O."/>
            <person name="Fraser C.M."/>
            <person name="Chatterjee A.K."/>
            <person name="Cartinhour S."/>
            <person name="Schneider D."/>
            <person name="Mansfield J.W."/>
            <person name="Collmer A."/>
            <person name="Buell R."/>
        </authorList>
    </citation>
    <scope>NUCLEOTIDE SEQUENCE [LARGE SCALE GENOMIC DNA]</scope>
    <source>
        <strain>1448A / Race 6</strain>
    </source>
</reference>
<dbReference type="EC" id="3.1.1.61" evidence="1"/>
<dbReference type="EC" id="3.5.1.44" evidence="1"/>
<dbReference type="EMBL" id="CP000058">
    <property type="protein sequence ID" value="AAZ37325.1"/>
    <property type="molecule type" value="Genomic_DNA"/>
</dbReference>
<dbReference type="RefSeq" id="WP_011169318.1">
    <property type="nucleotide sequence ID" value="NC_005773.3"/>
</dbReference>
<dbReference type="SMR" id="Q48F23"/>
<dbReference type="KEGG" id="psp:PSPPH_3876"/>
<dbReference type="eggNOG" id="COG2201">
    <property type="taxonomic scope" value="Bacteria"/>
</dbReference>
<dbReference type="HOGENOM" id="CLU_000445_51_0_6"/>
<dbReference type="Proteomes" id="UP000000551">
    <property type="component" value="Chromosome"/>
</dbReference>
<dbReference type="GO" id="GO:0005737">
    <property type="term" value="C:cytoplasm"/>
    <property type="evidence" value="ECO:0007669"/>
    <property type="project" value="UniProtKB-SubCell"/>
</dbReference>
<dbReference type="GO" id="GO:0000156">
    <property type="term" value="F:phosphorelay response regulator activity"/>
    <property type="evidence" value="ECO:0007669"/>
    <property type="project" value="InterPro"/>
</dbReference>
<dbReference type="GO" id="GO:0008984">
    <property type="term" value="F:protein-glutamate methylesterase activity"/>
    <property type="evidence" value="ECO:0007669"/>
    <property type="project" value="UniProtKB-UniRule"/>
</dbReference>
<dbReference type="GO" id="GO:0050568">
    <property type="term" value="F:protein-glutamine glutaminase activity"/>
    <property type="evidence" value="ECO:0007669"/>
    <property type="project" value="UniProtKB-UniRule"/>
</dbReference>
<dbReference type="GO" id="GO:0006935">
    <property type="term" value="P:chemotaxis"/>
    <property type="evidence" value="ECO:0007669"/>
    <property type="project" value="UniProtKB-UniRule"/>
</dbReference>
<dbReference type="CDD" id="cd16432">
    <property type="entry name" value="CheB_Rec"/>
    <property type="match status" value="1"/>
</dbReference>
<dbReference type="CDD" id="cd17541">
    <property type="entry name" value="REC_CheB-like"/>
    <property type="match status" value="1"/>
</dbReference>
<dbReference type="Gene3D" id="3.40.50.2300">
    <property type="match status" value="1"/>
</dbReference>
<dbReference type="Gene3D" id="3.40.50.180">
    <property type="entry name" value="Methylesterase CheB, C-terminal domain"/>
    <property type="match status" value="1"/>
</dbReference>
<dbReference type="HAMAP" id="MF_00099">
    <property type="entry name" value="CheB_chemtxs"/>
    <property type="match status" value="1"/>
</dbReference>
<dbReference type="InterPro" id="IPR008248">
    <property type="entry name" value="CheB-like"/>
</dbReference>
<dbReference type="InterPro" id="IPR035909">
    <property type="entry name" value="CheB_C"/>
</dbReference>
<dbReference type="InterPro" id="IPR011006">
    <property type="entry name" value="CheY-like_superfamily"/>
</dbReference>
<dbReference type="InterPro" id="IPR000673">
    <property type="entry name" value="Sig_transdc_resp-reg_Me-estase"/>
</dbReference>
<dbReference type="InterPro" id="IPR001789">
    <property type="entry name" value="Sig_transdc_resp-reg_receiver"/>
</dbReference>
<dbReference type="NCBIfam" id="NF009206">
    <property type="entry name" value="PRK12555.1"/>
    <property type="match status" value="1"/>
</dbReference>
<dbReference type="PANTHER" id="PTHR42872">
    <property type="entry name" value="PROTEIN-GLUTAMATE METHYLESTERASE/PROTEIN-GLUTAMINE GLUTAMINASE"/>
    <property type="match status" value="1"/>
</dbReference>
<dbReference type="PANTHER" id="PTHR42872:SF6">
    <property type="entry name" value="PROTEIN-GLUTAMATE METHYLESTERASE_PROTEIN-GLUTAMINE GLUTAMINASE"/>
    <property type="match status" value="1"/>
</dbReference>
<dbReference type="Pfam" id="PF01339">
    <property type="entry name" value="CheB_methylest"/>
    <property type="match status" value="1"/>
</dbReference>
<dbReference type="Pfam" id="PF00072">
    <property type="entry name" value="Response_reg"/>
    <property type="match status" value="1"/>
</dbReference>
<dbReference type="PIRSF" id="PIRSF000876">
    <property type="entry name" value="RR_chemtxs_CheB"/>
    <property type="match status" value="1"/>
</dbReference>
<dbReference type="SMART" id="SM00448">
    <property type="entry name" value="REC"/>
    <property type="match status" value="1"/>
</dbReference>
<dbReference type="SUPFAM" id="SSF52172">
    <property type="entry name" value="CheY-like"/>
    <property type="match status" value="1"/>
</dbReference>
<dbReference type="SUPFAM" id="SSF52738">
    <property type="entry name" value="Methylesterase CheB, C-terminal domain"/>
    <property type="match status" value="1"/>
</dbReference>
<dbReference type="PROSITE" id="PS50122">
    <property type="entry name" value="CHEB"/>
    <property type="match status" value="1"/>
</dbReference>
<dbReference type="PROSITE" id="PS50110">
    <property type="entry name" value="RESPONSE_REGULATORY"/>
    <property type="match status" value="1"/>
</dbReference>
<protein>
    <recommendedName>
        <fullName evidence="1">Protein-glutamate methylesterase/protein-glutamine glutaminase 3</fullName>
        <ecNumber evidence="1">3.1.1.61</ecNumber>
        <ecNumber evidence="1">3.5.1.44</ecNumber>
    </recommendedName>
</protein>
<proteinExistence type="inferred from homology"/>
<name>CHEB3_PSE14</name>
<organism>
    <name type="scientific">Pseudomonas savastanoi pv. phaseolicola (strain 1448A / Race 6)</name>
    <name type="common">Pseudomonas syringae pv. phaseolicola (strain 1448A / Race 6)</name>
    <dbReference type="NCBI Taxonomy" id="264730"/>
    <lineage>
        <taxon>Bacteria</taxon>
        <taxon>Pseudomonadati</taxon>
        <taxon>Pseudomonadota</taxon>
        <taxon>Gammaproteobacteria</taxon>
        <taxon>Pseudomonadales</taxon>
        <taxon>Pseudomonadaceae</taxon>
        <taxon>Pseudomonas</taxon>
    </lineage>
</organism>
<evidence type="ECO:0000255" key="1">
    <source>
        <dbReference type="HAMAP-Rule" id="MF_00099"/>
    </source>
</evidence>
<feature type="chain" id="PRO_0000225475" description="Protein-glutamate methylesterase/protein-glutamine glutaminase 3">
    <location>
        <begin position="1"/>
        <end position="336"/>
    </location>
</feature>
<feature type="domain" description="Response regulatory" evidence="1">
    <location>
        <begin position="2"/>
        <end position="119"/>
    </location>
</feature>
<feature type="domain" description="CheB-type methylesterase" evidence="1">
    <location>
        <begin position="147"/>
        <end position="336"/>
    </location>
</feature>
<feature type="active site" evidence="1">
    <location>
        <position position="159"/>
    </location>
</feature>
<feature type="active site" evidence="1">
    <location>
        <position position="186"/>
    </location>
</feature>
<feature type="active site" evidence="1">
    <location>
        <position position="279"/>
    </location>
</feature>
<feature type="modified residue" description="4-aspartylphosphate" evidence="1">
    <location>
        <position position="53"/>
    </location>
</feature>
<gene>
    <name evidence="1" type="primary">cheB3</name>
    <name type="ordered locus">PSPPH_3876</name>
</gene>
<accession>Q48F23</accession>
<keyword id="KW-0145">Chemotaxis</keyword>
<keyword id="KW-0963">Cytoplasm</keyword>
<keyword id="KW-0378">Hydrolase</keyword>
<keyword id="KW-0597">Phosphoprotein</keyword>
<sequence length="336" mass="36004">MKIAIVNDMPMAIEALRRALAFEPAHQIIWVASNGADAVQRCVEQTPDLILMDLIMPVMDGVEATRRIMAETPCAIVIVTVDREQNMRRVFEAMGHGALDVVDTPAIGGPNPKEAAAPLLRKILNIDWLIGQRVGREHVVAAPRSEPARRDRLVAIGSSAGGPAALEILLKGLPVSFPAAIVLVQHVDQVFAAGMAEWLSSASGLPVRLAKEGETPQPGVVLLAGTNHHIRLLKDGTLAYTAEPVNEVYRPSINVFFESVTRYWSGEAVGVLLTGMGRDGAQGLKAMRERGFLTIAQDQASSAVYGMPKAAAAIDAAVEIRPLPAIAPRLVEVFTQ</sequence>
<comment type="function">
    <text evidence="1">Involved in chemotaxis. Part of a chemotaxis signal transduction system that modulates chemotaxis in response to various stimuli. Catalyzes the demethylation of specific methylglutamate residues introduced into the chemoreceptors (methyl-accepting chemotaxis proteins or MCP) by CheR. Also mediates the irreversible deamidation of specific glutamine residues to glutamic acid.</text>
</comment>
<comment type="catalytic activity">
    <reaction evidence="1">
        <text>[protein]-L-glutamate 5-O-methyl ester + H2O = L-glutamyl-[protein] + methanol + H(+)</text>
        <dbReference type="Rhea" id="RHEA:23236"/>
        <dbReference type="Rhea" id="RHEA-COMP:10208"/>
        <dbReference type="Rhea" id="RHEA-COMP:10311"/>
        <dbReference type="ChEBI" id="CHEBI:15377"/>
        <dbReference type="ChEBI" id="CHEBI:15378"/>
        <dbReference type="ChEBI" id="CHEBI:17790"/>
        <dbReference type="ChEBI" id="CHEBI:29973"/>
        <dbReference type="ChEBI" id="CHEBI:82795"/>
        <dbReference type="EC" id="3.1.1.61"/>
    </reaction>
</comment>
<comment type="catalytic activity">
    <reaction evidence="1">
        <text>L-glutaminyl-[protein] + H2O = L-glutamyl-[protein] + NH4(+)</text>
        <dbReference type="Rhea" id="RHEA:16441"/>
        <dbReference type="Rhea" id="RHEA-COMP:10207"/>
        <dbReference type="Rhea" id="RHEA-COMP:10208"/>
        <dbReference type="ChEBI" id="CHEBI:15377"/>
        <dbReference type="ChEBI" id="CHEBI:28938"/>
        <dbReference type="ChEBI" id="CHEBI:29973"/>
        <dbReference type="ChEBI" id="CHEBI:30011"/>
        <dbReference type="EC" id="3.5.1.44"/>
    </reaction>
</comment>
<comment type="subcellular location">
    <subcellularLocation>
        <location evidence="1">Cytoplasm</location>
    </subcellularLocation>
</comment>
<comment type="domain">
    <text evidence="1">Contains a C-terminal catalytic domain, and an N-terminal region which modulates catalytic activity.</text>
</comment>
<comment type="PTM">
    <text evidence="1">Phosphorylated by CheA. Phosphorylation of the N-terminal regulatory domain activates the methylesterase activity.</text>
</comment>
<comment type="similarity">
    <text evidence="1">Belongs to the CheB family.</text>
</comment>